<keyword id="KW-0007">Acetylation</keyword>
<keyword id="KW-0256">Endoplasmic reticulum</keyword>
<keyword id="KW-0349">Heme</keyword>
<keyword id="KW-0408">Iron</keyword>
<keyword id="KW-0479">Metal-binding</keyword>
<keyword id="KW-0492">Microsome</keyword>
<keyword id="KW-0560">Oxidoreductase</keyword>
<keyword id="KW-0597">Phosphoprotein</keyword>
<keyword id="KW-1185">Reference proteome</keyword>
<keyword id="KW-0677">Repeat</keyword>
<keyword id="KW-0702">S-nitrosylation</keyword>
<protein>
    <recommendedName>
        <fullName>Heme oxygenase 2</fullName>
        <shortName>HO-2</shortName>
        <ecNumber evidence="2">1.14.14.18</ecNumber>
    </recommendedName>
</protein>
<gene>
    <name type="primary">HMOX2</name>
    <name type="ORF">QbsB-11392</name>
</gene>
<feature type="initiator methionine" description="Removed" evidence="3">
    <location>
        <position position="1"/>
    </location>
</feature>
<feature type="chain" id="PRO_0000317708" description="Heme oxygenase 2">
    <location>
        <begin position="2"/>
        <end position="316"/>
    </location>
</feature>
<feature type="repeat" description="HRM 1">
    <location>
        <begin position="264"/>
        <end position="269"/>
    </location>
</feature>
<feature type="repeat" description="HRM 2">
    <location>
        <begin position="281"/>
        <end position="286"/>
    </location>
</feature>
<feature type="region of interest" description="Disordered" evidence="4">
    <location>
        <begin position="1"/>
        <end position="29"/>
    </location>
</feature>
<feature type="compositionally biased region" description="Acidic residues" evidence="4">
    <location>
        <begin position="1"/>
        <end position="12"/>
    </location>
</feature>
<feature type="compositionally biased region" description="Basic and acidic residues" evidence="4">
    <location>
        <begin position="13"/>
        <end position="27"/>
    </location>
</feature>
<feature type="binding site" description="axial binding residue" evidence="1">
    <location>
        <position position="45"/>
    </location>
    <ligand>
        <name>heme b</name>
        <dbReference type="ChEBI" id="CHEBI:60344"/>
    </ligand>
    <ligandPart>
        <name>Fe</name>
        <dbReference type="ChEBI" id="CHEBI:18248"/>
    </ligandPart>
</feature>
<feature type="modified residue" description="N-acetylserine" evidence="3">
    <location>
        <position position="2"/>
    </location>
</feature>
<feature type="modified residue" description="Phosphoserine" evidence="3">
    <location>
        <position position="2"/>
    </location>
</feature>
<feature type="modified residue" description="S-nitrosocysteine" evidence="3">
    <location>
        <position position="265"/>
    </location>
</feature>
<feature type="modified residue" description="S-nitrosocysteine" evidence="3">
    <location>
        <position position="282"/>
    </location>
</feature>
<dbReference type="EC" id="1.14.14.18" evidence="2"/>
<dbReference type="EMBL" id="AB220384">
    <property type="protein sequence ID" value="BAE72917.1"/>
    <property type="molecule type" value="mRNA"/>
</dbReference>
<dbReference type="RefSeq" id="NP_001270155.1">
    <property type="nucleotide sequence ID" value="NM_001283226.1"/>
</dbReference>
<dbReference type="SMR" id="Q2PG53"/>
<dbReference type="STRING" id="9541.ENSMFAP00000015152"/>
<dbReference type="eggNOG" id="KOG4480">
    <property type="taxonomic scope" value="Eukaryota"/>
</dbReference>
<dbReference type="Proteomes" id="UP000233100">
    <property type="component" value="Unplaced"/>
</dbReference>
<dbReference type="GO" id="GO:0005783">
    <property type="term" value="C:endoplasmic reticulum"/>
    <property type="evidence" value="ECO:0007669"/>
    <property type="project" value="UniProtKB-SubCell"/>
</dbReference>
<dbReference type="GO" id="GO:0020037">
    <property type="term" value="F:heme binding"/>
    <property type="evidence" value="ECO:0007669"/>
    <property type="project" value="TreeGrafter"/>
</dbReference>
<dbReference type="GO" id="GO:0004392">
    <property type="term" value="F:heme oxygenase (decyclizing) activity"/>
    <property type="evidence" value="ECO:0007669"/>
    <property type="project" value="UniProtKB-EC"/>
</dbReference>
<dbReference type="GO" id="GO:0046872">
    <property type="term" value="F:metal ion binding"/>
    <property type="evidence" value="ECO:0007669"/>
    <property type="project" value="UniProtKB-KW"/>
</dbReference>
<dbReference type="GO" id="GO:0042167">
    <property type="term" value="P:heme catabolic process"/>
    <property type="evidence" value="ECO:0007669"/>
    <property type="project" value="TreeGrafter"/>
</dbReference>
<dbReference type="GO" id="GO:0006788">
    <property type="term" value="P:heme oxidation"/>
    <property type="evidence" value="ECO:0007669"/>
    <property type="project" value="InterPro"/>
</dbReference>
<dbReference type="GO" id="GO:0006979">
    <property type="term" value="P:response to oxidative stress"/>
    <property type="evidence" value="ECO:0007669"/>
    <property type="project" value="TreeGrafter"/>
</dbReference>
<dbReference type="CDD" id="cd19165">
    <property type="entry name" value="HemeO"/>
    <property type="match status" value="1"/>
</dbReference>
<dbReference type="FunFam" id="1.20.910.10:FF:000001">
    <property type="entry name" value="Heme oxygenase 1"/>
    <property type="match status" value="1"/>
</dbReference>
<dbReference type="Gene3D" id="1.20.910.10">
    <property type="entry name" value="Heme oxygenase-like"/>
    <property type="match status" value="1"/>
</dbReference>
<dbReference type="InterPro" id="IPR002051">
    <property type="entry name" value="Haem_Oase"/>
</dbReference>
<dbReference type="InterPro" id="IPR016053">
    <property type="entry name" value="Haem_Oase-like"/>
</dbReference>
<dbReference type="InterPro" id="IPR016084">
    <property type="entry name" value="Haem_Oase-like_multi-hlx"/>
</dbReference>
<dbReference type="InterPro" id="IPR018207">
    <property type="entry name" value="Haem_oxygenase_CS"/>
</dbReference>
<dbReference type="PANTHER" id="PTHR10720">
    <property type="entry name" value="HEME OXYGENASE"/>
    <property type="match status" value="1"/>
</dbReference>
<dbReference type="PANTHER" id="PTHR10720:SF2">
    <property type="entry name" value="HEME OXYGENASE 2"/>
    <property type="match status" value="1"/>
</dbReference>
<dbReference type="Pfam" id="PF01126">
    <property type="entry name" value="Heme_oxygenase"/>
    <property type="match status" value="1"/>
</dbReference>
<dbReference type="PIRSF" id="PIRSF000343">
    <property type="entry name" value="Haem_Oase"/>
    <property type="match status" value="1"/>
</dbReference>
<dbReference type="PRINTS" id="PR00088">
    <property type="entry name" value="HAEMOXYGNASE"/>
</dbReference>
<dbReference type="SUPFAM" id="SSF48613">
    <property type="entry name" value="Heme oxygenase-like"/>
    <property type="match status" value="1"/>
</dbReference>
<dbReference type="PROSITE" id="PS00593">
    <property type="entry name" value="HEME_OXYGENASE"/>
    <property type="match status" value="1"/>
</dbReference>
<proteinExistence type="evidence at transcript level"/>
<name>HMOX2_MACFA</name>
<organism>
    <name type="scientific">Macaca fascicularis</name>
    <name type="common">Crab-eating macaque</name>
    <name type="synonym">Cynomolgus monkey</name>
    <dbReference type="NCBI Taxonomy" id="9541"/>
    <lineage>
        <taxon>Eukaryota</taxon>
        <taxon>Metazoa</taxon>
        <taxon>Chordata</taxon>
        <taxon>Craniata</taxon>
        <taxon>Vertebrata</taxon>
        <taxon>Euteleostomi</taxon>
        <taxon>Mammalia</taxon>
        <taxon>Eutheria</taxon>
        <taxon>Euarchontoglires</taxon>
        <taxon>Primates</taxon>
        <taxon>Haplorrhini</taxon>
        <taxon>Catarrhini</taxon>
        <taxon>Cercopithecidae</taxon>
        <taxon>Cercopithecinae</taxon>
        <taxon>Macaca</taxon>
    </lineage>
</organism>
<evidence type="ECO:0000250" key="1"/>
<evidence type="ECO:0000250" key="2">
    <source>
        <dbReference type="UniProtKB" id="O48782"/>
    </source>
</evidence>
<evidence type="ECO:0000250" key="3">
    <source>
        <dbReference type="UniProtKB" id="P30519"/>
    </source>
</evidence>
<evidence type="ECO:0000256" key="4">
    <source>
        <dbReference type="SAM" id="MobiDB-lite"/>
    </source>
</evidence>
<evidence type="ECO:0000305" key="5"/>
<accession>Q2PG53</accession>
<comment type="function">
    <text evidence="1">Heme oxygenase cleaves the heme ring at the alpha methene bridge to form biliverdin. Biliverdin is subsequently converted to bilirubin by biliverdin reductase. Under physiological conditions, the activity of heme oxygenase is highest in the spleen, where senescent erythrocytes are sequestrated and destroyed. Heme oxygenase 2 could be implicated in the production of carbon monoxide in brain where it could act as a neurotransmitter.</text>
</comment>
<comment type="catalytic activity">
    <reaction evidence="2">
        <text>heme b + 3 reduced [NADPH--hemoprotein reductase] + 3 O2 = biliverdin IXalpha + CO + Fe(2+) + 3 oxidized [NADPH--hemoprotein reductase] + 3 H2O + H(+)</text>
        <dbReference type="Rhea" id="RHEA:21764"/>
        <dbReference type="Rhea" id="RHEA-COMP:11964"/>
        <dbReference type="Rhea" id="RHEA-COMP:11965"/>
        <dbReference type="ChEBI" id="CHEBI:15377"/>
        <dbReference type="ChEBI" id="CHEBI:15378"/>
        <dbReference type="ChEBI" id="CHEBI:15379"/>
        <dbReference type="ChEBI" id="CHEBI:17245"/>
        <dbReference type="ChEBI" id="CHEBI:29033"/>
        <dbReference type="ChEBI" id="CHEBI:57618"/>
        <dbReference type="ChEBI" id="CHEBI:57991"/>
        <dbReference type="ChEBI" id="CHEBI:58210"/>
        <dbReference type="ChEBI" id="CHEBI:60344"/>
        <dbReference type="EC" id="1.14.14.18"/>
    </reaction>
</comment>
<comment type="subcellular location">
    <subcellularLocation>
        <location>Microsome</location>
    </subcellularLocation>
    <subcellularLocation>
        <location evidence="1">Endoplasmic reticulum</location>
    </subcellularLocation>
</comment>
<comment type="PTM">
    <text evidence="3">S-nitrosylated by BLVRB.</text>
</comment>
<comment type="similarity">
    <text evidence="5">Belongs to the heme oxygenase family.</text>
</comment>
<reference key="1">
    <citation type="submission" date="2005-07" db="EMBL/GenBank/DDBJ databases">
        <title>Analysis of gene expression in cynomolgus monkey tissues by macaque cDNA oligo-chips.</title>
        <authorList>
            <person name="Kobayashi M."/>
            <person name="Tanuma R."/>
            <person name="Hirata M."/>
            <person name="Osada N."/>
            <person name="Kusuda J."/>
            <person name="Sugano S."/>
            <person name="Hashimoto K."/>
        </authorList>
    </citation>
    <scope>NUCLEOTIDE SEQUENCE [LARGE SCALE MRNA]</scope>
    <source>
        <tissue>Brain stem</tissue>
    </source>
</reference>
<sequence>MSAEVETSEGVDESEKKNSGALEKENQMRMADLSELLKEGTKEAHDRAENTQFVKDFLKGNIKKELFKLATTALYFTYSALEEEMERNKDHPTFAPLYFPMELHRKEALTKDMEYFFGENWEEQVQCPKAAKKYVERIHYIGQNEPELLVAHAYTRYMGDLSGGQVLKKVAQRALKLPSTGEGTQFYLFENVDNAQQFKQLYRARMNALDLNMKTKERIVEEANKAFEYNMQIFNELDQAGSTLARETLEDGFPVHDGKGDMRKCPFYAGEQDKGALEGSSCPFRTAMAVLRKPSLQFILAAGMALAAGLLAWYYM</sequence>